<accession>B4SVW5</accession>
<keyword id="KW-0028">Amino-acid biosynthesis</keyword>
<keyword id="KW-0067">ATP-binding</keyword>
<keyword id="KW-0963">Cytoplasm</keyword>
<keyword id="KW-0418">Kinase</keyword>
<keyword id="KW-0547">Nucleotide-binding</keyword>
<keyword id="KW-0641">Proline biosynthesis</keyword>
<keyword id="KW-0808">Transferase</keyword>
<comment type="function">
    <text evidence="1">Catalyzes the transfer of a phosphate group to glutamate to form L-glutamate 5-phosphate.</text>
</comment>
<comment type="catalytic activity">
    <reaction evidence="1">
        <text>L-glutamate + ATP = L-glutamyl 5-phosphate + ADP</text>
        <dbReference type="Rhea" id="RHEA:14877"/>
        <dbReference type="ChEBI" id="CHEBI:29985"/>
        <dbReference type="ChEBI" id="CHEBI:30616"/>
        <dbReference type="ChEBI" id="CHEBI:58274"/>
        <dbReference type="ChEBI" id="CHEBI:456216"/>
        <dbReference type="EC" id="2.7.2.11"/>
    </reaction>
</comment>
<comment type="pathway">
    <text evidence="1">Amino-acid biosynthesis; L-proline biosynthesis; L-glutamate 5-semialdehyde from L-glutamate: step 1/2.</text>
</comment>
<comment type="subcellular location">
    <subcellularLocation>
        <location evidence="1">Cytoplasm</location>
    </subcellularLocation>
</comment>
<comment type="similarity">
    <text evidence="1">Belongs to the glutamate 5-kinase family.</text>
</comment>
<sequence length="367" mass="39141">MSDSQTLVVKLGTSVLTGGSRRLNRAHIVELVRQCAQLHAAGHRIVIVTSGAIAAGREHLGYPELPATIASKQLLAAVGQSRLIQLWEQLFSIYGIHIGQMLLTRADMEDRERFLNARDTLRALLDNHIVPVINENDAVATAEIKVGDNDNLSALAAILAGADKLLLLTDQQGLFTADPRSNPQAELIKDVYGVDDALRSIAGDSVSGLGTGGMSTKLQAADVACRAGIDTIIASGSKPGVIGDVMEGISVGTRFHAQASPLENRKRWIFGAPPAGEITVDEGATAAMLERGSSLLPKGIKSVTGNFSRGEVIRICNLQGRDIAHGVSRYNSDALRRIAGHHSQQIDAILGYEYGPVAVHRDDMITR</sequence>
<evidence type="ECO:0000255" key="1">
    <source>
        <dbReference type="HAMAP-Rule" id="MF_00456"/>
    </source>
</evidence>
<name>PROB_SALNS</name>
<dbReference type="EC" id="2.7.2.11" evidence="1"/>
<dbReference type="EMBL" id="CP001113">
    <property type="protein sequence ID" value="ACF61910.1"/>
    <property type="molecule type" value="Genomic_DNA"/>
</dbReference>
<dbReference type="RefSeq" id="WP_001285275.1">
    <property type="nucleotide sequence ID" value="NZ_CCMR01000003.1"/>
</dbReference>
<dbReference type="SMR" id="B4SVW5"/>
<dbReference type="KEGG" id="see:SNSL254_A0362"/>
<dbReference type="HOGENOM" id="CLU_025400_2_0_6"/>
<dbReference type="UniPathway" id="UPA00098">
    <property type="reaction ID" value="UER00359"/>
</dbReference>
<dbReference type="Proteomes" id="UP000008824">
    <property type="component" value="Chromosome"/>
</dbReference>
<dbReference type="GO" id="GO:0005829">
    <property type="term" value="C:cytosol"/>
    <property type="evidence" value="ECO:0007669"/>
    <property type="project" value="TreeGrafter"/>
</dbReference>
<dbReference type="GO" id="GO:0005524">
    <property type="term" value="F:ATP binding"/>
    <property type="evidence" value="ECO:0007669"/>
    <property type="project" value="UniProtKB-KW"/>
</dbReference>
<dbReference type="GO" id="GO:0004349">
    <property type="term" value="F:glutamate 5-kinase activity"/>
    <property type="evidence" value="ECO:0007669"/>
    <property type="project" value="UniProtKB-UniRule"/>
</dbReference>
<dbReference type="GO" id="GO:0003723">
    <property type="term" value="F:RNA binding"/>
    <property type="evidence" value="ECO:0007669"/>
    <property type="project" value="InterPro"/>
</dbReference>
<dbReference type="GO" id="GO:0055129">
    <property type="term" value="P:L-proline biosynthetic process"/>
    <property type="evidence" value="ECO:0007669"/>
    <property type="project" value="UniProtKB-UniRule"/>
</dbReference>
<dbReference type="CDD" id="cd04242">
    <property type="entry name" value="AAK_G5K_ProB"/>
    <property type="match status" value="1"/>
</dbReference>
<dbReference type="CDD" id="cd21157">
    <property type="entry name" value="PUA_G5K"/>
    <property type="match status" value="1"/>
</dbReference>
<dbReference type="FunFam" id="2.30.130.10:FF:000003">
    <property type="entry name" value="Glutamate 5-kinase"/>
    <property type="match status" value="1"/>
</dbReference>
<dbReference type="FunFam" id="3.40.1160.10:FF:000006">
    <property type="entry name" value="Glutamate 5-kinase"/>
    <property type="match status" value="1"/>
</dbReference>
<dbReference type="Gene3D" id="3.40.1160.10">
    <property type="entry name" value="Acetylglutamate kinase-like"/>
    <property type="match status" value="2"/>
</dbReference>
<dbReference type="Gene3D" id="2.30.130.10">
    <property type="entry name" value="PUA domain"/>
    <property type="match status" value="1"/>
</dbReference>
<dbReference type="HAMAP" id="MF_00456">
    <property type="entry name" value="ProB"/>
    <property type="match status" value="1"/>
</dbReference>
<dbReference type="InterPro" id="IPR036393">
    <property type="entry name" value="AceGlu_kinase-like_sf"/>
</dbReference>
<dbReference type="InterPro" id="IPR001048">
    <property type="entry name" value="Asp/Glu/Uridylate_kinase"/>
</dbReference>
<dbReference type="InterPro" id="IPR041739">
    <property type="entry name" value="G5K_ProB"/>
</dbReference>
<dbReference type="InterPro" id="IPR001057">
    <property type="entry name" value="Glu/AcGlu_kinase"/>
</dbReference>
<dbReference type="InterPro" id="IPR011529">
    <property type="entry name" value="Glu_5kinase"/>
</dbReference>
<dbReference type="InterPro" id="IPR005715">
    <property type="entry name" value="Glu_5kinase/COase_Synthase"/>
</dbReference>
<dbReference type="InterPro" id="IPR019797">
    <property type="entry name" value="Glutamate_5-kinase_CS"/>
</dbReference>
<dbReference type="InterPro" id="IPR002478">
    <property type="entry name" value="PUA"/>
</dbReference>
<dbReference type="InterPro" id="IPR015947">
    <property type="entry name" value="PUA-like_sf"/>
</dbReference>
<dbReference type="InterPro" id="IPR036974">
    <property type="entry name" value="PUA_sf"/>
</dbReference>
<dbReference type="NCBIfam" id="TIGR01027">
    <property type="entry name" value="proB"/>
    <property type="match status" value="1"/>
</dbReference>
<dbReference type="PANTHER" id="PTHR43654">
    <property type="entry name" value="GLUTAMATE 5-KINASE"/>
    <property type="match status" value="1"/>
</dbReference>
<dbReference type="PANTHER" id="PTHR43654:SF1">
    <property type="entry name" value="ISOPENTENYL PHOSPHATE KINASE"/>
    <property type="match status" value="1"/>
</dbReference>
<dbReference type="Pfam" id="PF00696">
    <property type="entry name" value="AA_kinase"/>
    <property type="match status" value="1"/>
</dbReference>
<dbReference type="Pfam" id="PF01472">
    <property type="entry name" value="PUA"/>
    <property type="match status" value="1"/>
</dbReference>
<dbReference type="PIRSF" id="PIRSF000729">
    <property type="entry name" value="GK"/>
    <property type="match status" value="1"/>
</dbReference>
<dbReference type="PRINTS" id="PR00474">
    <property type="entry name" value="GLU5KINASE"/>
</dbReference>
<dbReference type="SMART" id="SM00359">
    <property type="entry name" value="PUA"/>
    <property type="match status" value="1"/>
</dbReference>
<dbReference type="SUPFAM" id="SSF53633">
    <property type="entry name" value="Carbamate kinase-like"/>
    <property type="match status" value="1"/>
</dbReference>
<dbReference type="SUPFAM" id="SSF88697">
    <property type="entry name" value="PUA domain-like"/>
    <property type="match status" value="1"/>
</dbReference>
<dbReference type="PROSITE" id="PS00902">
    <property type="entry name" value="GLUTAMATE_5_KINASE"/>
    <property type="match status" value="1"/>
</dbReference>
<dbReference type="PROSITE" id="PS50890">
    <property type="entry name" value="PUA"/>
    <property type="match status" value="1"/>
</dbReference>
<feature type="chain" id="PRO_1000125260" description="Glutamate 5-kinase">
    <location>
        <begin position="1"/>
        <end position="367"/>
    </location>
</feature>
<feature type="domain" description="PUA" evidence="1">
    <location>
        <begin position="275"/>
        <end position="353"/>
    </location>
</feature>
<feature type="binding site" evidence="1">
    <location>
        <position position="10"/>
    </location>
    <ligand>
        <name>ATP</name>
        <dbReference type="ChEBI" id="CHEBI:30616"/>
    </ligand>
</feature>
<feature type="binding site" evidence="1">
    <location>
        <position position="50"/>
    </location>
    <ligand>
        <name>substrate</name>
    </ligand>
</feature>
<feature type="binding site" evidence="1">
    <location>
        <position position="137"/>
    </location>
    <ligand>
        <name>substrate</name>
    </ligand>
</feature>
<feature type="binding site" evidence="1">
    <location>
        <position position="149"/>
    </location>
    <ligand>
        <name>substrate</name>
    </ligand>
</feature>
<feature type="binding site" evidence="1">
    <location>
        <begin position="169"/>
        <end position="170"/>
    </location>
    <ligand>
        <name>ATP</name>
        <dbReference type="ChEBI" id="CHEBI:30616"/>
    </ligand>
</feature>
<feature type="binding site" evidence="1">
    <location>
        <begin position="211"/>
        <end position="217"/>
    </location>
    <ligand>
        <name>ATP</name>
        <dbReference type="ChEBI" id="CHEBI:30616"/>
    </ligand>
</feature>
<proteinExistence type="inferred from homology"/>
<organism>
    <name type="scientific">Salmonella newport (strain SL254)</name>
    <dbReference type="NCBI Taxonomy" id="423368"/>
    <lineage>
        <taxon>Bacteria</taxon>
        <taxon>Pseudomonadati</taxon>
        <taxon>Pseudomonadota</taxon>
        <taxon>Gammaproteobacteria</taxon>
        <taxon>Enterobacterales</taxon>
        <taxon>Enterobacteriaceae</taxon>
        <taxon>Salmonella</taxon>
    </lineage>
</organism>
<protein>
    <recommendedName>
        <fullName evidence="1">Glutamate 5-kinase</fullName>
        <ecNumber evidence="1">2.7.2.11</ecNumber>
    </recommendedName>
    <alternativeName>
        <fullName evidence="1">Gamma-glutamyl kinase</fullName>
        <shortName evidence="1">GK</shortName>
    </alternativeName>
</protein>
<reference key="1">
    <citation type="journal article" date="2011" name="J. Bacteriol.">
        <title>Comparative genomics of 28 Salmonella enterica isolates: evidence for CRISPR-mediated adaptive sublineage evolution.</title>
        <authorList>
            <person name="Fricke W.F."/>
            <person name="Mammel M.K."/>
            <person name="McDermott P.F."/>
            <person name="Tartera C."/>
            <person name="White D.G."/>
            <person name="Leclerc J.E."/>
            <person name="Ravel J."/>
            <person name="Cebula T.A."/>
        </authorList>
    </citation>
    <scope>NUCLEOTIDE SEQUENCE [LARGE SCALE GENOMIC DNA]</scope>
    <source>
        <strain>SL254</strain>
    </source>
</reference>
<gene>
    <name evidence="1" type="primary">proB</name>
    <name type="ordered locus">SNSL254_A0362</name>
</gene>